<gene>
    <name evidence="1" type="primary">valS</name>
    <name type="ordered locus">BUsg_354</name>
</gene>
<dbReference type="EC" id="6.1.1.9" evidence="1"/>
<dbReference type="EMBL" id="AE013218">
    <property type="protein sequence ID" value="AAM67907.1"/>
    <property type="molecule type" value="Genomic_DNA"/>
</dbReference>
<dbReference type="RefSeq" id="WP_011053874.1">
    <property type="nucleotide sequence ID" value="NC_004061.1"/>
</dbReference>
<dbReference type="SMR" id="Q8K9I1"/>
<dbReference type="STRING" id="198804.BUsg_354"/>
<dbReference type="GeneID" id="93003824"/>
<dbReference type="KEGG" id="bas:BUsg_354"/>
<dbReference type="eggNOG" id="COG0525">
    <property type="taxonomic scope" value="Bacteria"/>
</dbReference>
<dbReference type="HOGENOM" id="CLU_001493_0_2_6"/>
<dbReference type="Proteomes" id="UP000000416">
    <property type="component" value="Chromosome"/>
</dbReference>
<dbReference type="GO" id="GO:0005829">
    <property type="term" value="C:cytosol"/>
    <property type="evidence" value="ECO:0007669"/>
    <property type="project" value="TreeGrafter"/>
</dbReference>
<dbReference type="GO" id="GO:0002161">
    <property type="term" value="F:aminoacyl-tRNA deacylase activity"/>
    <property type="evidence" value="ECO:0007669"/>
    <property type="project" value="InterPro"/>
</dbReference>
<dbReference type="GO" id="GO:0005524">
    <property type="term" value="F:ATP binding"/>
    <property type="evidence" value="ECO:0007669"/>
    <property type="project" value="UniProtKB-UniRule"/>
</dbReference>
<dbReference type="GO" id="GO:0004832">
    <property type="term" value="F:valine-tRNA ligase activity"/>
    <property type="evidence" value="ECO:0007669"/>
    <property type="project" value="UniProtKB-UniRule"/>
</dbReference>
<dbReference type="GO" id="GO:0006438">
    <property type="term" value="P:valyl-tRNA aminoacylation"/>
    <property type="evidence" value="ECO:0007669"/>
    <property type="project" value="UniProtKB-UniRule"/>
</dbReference>
<dbReference type="CDD" id="cd07962">
    <property type="entry name" value="Anticodon_Ia_Val"/>
    <property type="match status" value="1"/>
</dbReference>
<dbReference type="CDD" id="cd00817">
    <property type="entry name" value="ValRS_core"/>
    <property type="match status" value="1"/>
</dbReference>
<dbReference type="FunFam" id="3.40.50.620:FF:000032">
    <property type="entry name" value="Valine--tRNA ligase"/>
    <property type="match status" value="1"/>
</dbReference>
<dbReference type="FunFam" id="3.40.50.620:FF:000073">
    <property type="entry name" value="Valine--tRNA ligase"/>
    <property type="match status" value="1"/>
</dbReference>
<dbReference type="FunFam" id="3.90.740.10:FF:000004">
    <property type="entry name" value="Valine--tRNA ligase"/>
    <property type="match status" value="1"/>
</dbReference>
<dbReference type="Gene3D" id="3.40.50.620">
    <property type="entry name" value="HUPs"/>
    <property type="match status" value="2"/>
</dbReference>
<dbReference type="Gene3D" id="1.10.730.10">
    <property type="entry name" value="Isoleucyl-tRNA Synthetase, Domain 1"/>
    <property type="match status" value="1"/>
</dbReference>
<dbReference type="Gene3D" id="1.10.287.380">
    <property type="entry name" value="Valyl-tRNA synthetase, C-terminal domain"/>
    <property type="match status" value="1"/>
</dbReference>
<dbReference type="Gene3D" id="3.90.740.10">
    <property type="entry name" value="Valyl/Leucyl/Isoleucyl-tRNA synthetase, editing domain"/>
    <property type="match status" value="1"/>
</dbReference>
<dbReference type="HAMAP" id="MF_02004">
    <property type="entry name" value="Val_tRNA_synth_type1"/>
    <property type="match status" value="1"/>
</dbReference>
<dbReference type="InterPro" id="IPR001412">
    <property type="entry name" value="aa-tRNA-synth_I_CS"/>
</dbReference>
<dbReference type="InterPro" id="IPR002300">
    <property type="entry name" value="aa-tRNA-synth_Ia"/>
</dbReference>
<dbReference type="InterPro" id="IPR033705">
    <property type="entry name" value="Anticodon_Ia_Val"/>
</dbReference>
<dbReference type="InterPro" id="IPR013155">
    <property type="entry name" value="M/V/L/I-tRNA-synth_anticd-bd"/>
</dbReference>
<dbReference type="InterPro" id="IPR014729">
    <property type="entry name" value="Rossmann-like_a/b/a_fold"/>
</dbReference>
<dbReference type="InterPro" id="IPR010978">
    <property type="entry name" value="tRNA-bd_arm"/>
</dbReference>
<dbReference type="InterPro" id="IPR009080">
    <property type="entry name" value="tRNAsynth_Ia_anticodon-bd"/>
</dbReference>
<dbReference type="InterPro" id="IPR037118">
    <property type="entry name" value="Val-tRNA_synth_C_sf"/>
</dbReference>
<dbReference type="InterPro" id="IPR019499">
    <property type="entry name" value="Val-tRNA_synth_tRNA-bd"/>
</dbReference>
<dbReference type="InterPro" id="IPR009008">
    <property type="entry name" value="Val/Leu/Ile-tRNA-synth_edit"/>
</dbReference>
<dbReference type="InterPro" id="IPR002303">
    <property type="entry name" value="Valyl-tRNA_ligase"/>
</dbReference>
<dbReference type="NCBIfam" id="NF004349">
    <property type="entry name" value="PRK05729.1"/>
    <property type="match status" value="1"/>
</dbReference>
<dbReference type="NCBIfam" id="TIGR00422">
    <property type="entry name" value="valS"/>
    <property type="match status" value="1"/>
</dbReference>
<dbReference type="PANTHER" id="PTHR11946:SF93">
    <property type="entry name" value="VALINE--TRNA LIGASE, CHLOROPLASTIC_MITOCHONDRIAL 2"/>
    <property type="match status" value="1"/>
</dbReference>
<dbReference type="PANTHER" id="PTHR11946">
    <property type="entry name" value="VALYL-TRNA SYNTHETASES"/>
    <property type="match status" value="1"/>
</dbReference>
<dbReference type="Pfam" id="PF08264">
    <property type="entry name" value="Anticodon_1"/>
    <property type="match status" value="1"/>
</dbReference>
<dbReference type="Pfam" id="PF00133">
    <property type="entry name" value="tRNA-synt_1"/>
    <property type="match status" value="1"/>
</dbReference>
<dbReference type="Pfam" id="PF10458">
    <property type="entry name" value="Val_tRNA-synt_C"/>
    <property type="match status" value="1"/>
</dbReference>
<dbReference type="PRINTS" id="PR00986">
    <property type="entry name" value="TRNASYNTHVAL"/>
</dbReference>
<dbReference type="SUPFAM" id="SSF47323">
    <property type="entry name" value="Anticodon-binding domain of a subclass of class I aminoacyl-tRNA synthetases"/>
    <property type="match status" value="1"/>
</dbReference>
<dbReference type="SUPFAM" id="SSF52374">
    <property type="entry name" value="Nucleotidylyl transferase"/>
    <property type="match status" value="1"/>
</dbReference>
<dbReference type="SUPFAM" id="SSF46589">
    <property type="entry name" value="tRNA-binding arm"/>
    <property type="match status" value="1"/>
</dbReference>
<dbReference type="SUPFAM" id="SSF50677">
    <property type="entry name" value="ValRS/IleRS/LeuRS editing domain"/>
    <property type="match status" value="1"/>
</dbReference>
<dbReference type="PROSITE" id="PS00178">
    <property type="entry name" value="AA_TRNA_LIGASE_I"/>
    <property type="match status" value="1"/>
</dbReference>
<name>SYV_BUCAP</name>
<accession>Q8K9I1</accession>
<protein>
    <recommendedName>
        <fullName evidence="1">Valine--tRNA ligase</fullName>
        <ecNumber evidence="1">6.1.1.9</ecNumber>
    </recommendedName>
    <alternativeName>
        <fullName evidence="1">Valyl-tRNA synthetase</fullName>
        <shortName evidence="1">ValRS</shortName>
    </alternativeName>
</protein>
<reference key="1">
    <citation type="journal article" date="2002" name="Science">
        <title>50 million years of genomic stasis in endosymbiotic bacteria.</title>
        <authorList>
            <person name="Tamas I."/>
            <person name="Klasson L."/>
            <person name="Canbaeck B."/>
            <person name="Naeslund A.K."/>
            <person name="Eriksson A.-S."/>
            <person name="Wernegreen J.J."/>
            <person name="Sandstroem J.P."/>
            <person name="Moran N.A."/>
            <person name="Andersson S.G.E."/>
        </authorList>
    </citation>
    <scope>NUCLEOTIDE SEQUENCE [LARGE SCALE GENOMIC DNA]</scope>
    <source>
        <strain>Sg</strain>
    </source>
</reference>
<feature type="chain" id="PRO_0000106217" description="Valine--tRNA ligase">
    <location>
        <begin position="1"/>
        <end position="960"/>
    </location>
</feature>
<feature type="coiled-coil region" evidence="1">
    <location>
        <begin position="879"/>
        <end position="950"/>
    </location>
</feature>
<feature type="short sequence motif" description="'HIGH' region">
    <location>
        <begin position="42"/>
        <end position="52"/>
    </location>
</feature>
<feature type="short sequence motif" description="'KMSKS' region">
    <location>
        <begin position="553"/>
        <end position="557"/>
    </location>
</feature>
<feature type="binding site" evidence="1">
    <location>
        <position position="556"/>
    </location>
    <ligand>
        <name>ATP</name>
        <dbReference type="ChEBI" id="CHEBI:30616"/>
    </ligand>
</feature>
<sequence length="960" mass="113269">MKKNYNPKDIEEHLYNFWEKNGFFKPNNNLNKPAFCIMMPPPNITGNLHMGHAFQQTIMDILIRYNRMQGKNTLWQVGTDHAGIATQILIERQIFSEERKTKKDYSRNDFIKKIWKWKKKSNFSVKKQMKRLGNSVDWDREKFTLDPDISNSVKEAFIILYKNNLIYQKKRLVHWDSKLETVISDLEVEHRLIKSKKWFIRYPIIKNIKNINIEYLLVATTRPETLLGDTALAINPKDDKYNHLIGQSVICPIVNRIIPIIADHYADMNKDTGCVKITPGHDFNDYEVGQRHKLPMINIFTFNGKIKSNFSIYDYQGSKSNFYDSSIPTEFQNLDILSARKKIIYEIEKLGLLEKIEECNFFTPYSERSGVIIQPMLTNQWYLKTSHLSQSAIDVVREKKIKFIPNQYKSMYLSWMNNIEDWCISRQLWWGHQIPVWYDDKKNIYVGHSEKKIREEYNISDDMILNQDNDVLDTWFSSGLWTFSTLGWPEKTEFLKIFHSTDVLVSGFDIIFFWIARMIMLTMYLVKDSYGNPQIPFKDVYITGLIRDEEGKKMSKSKGNVIDPIDMIDGISLNELIEKRTSNLLQPHLSQKIRYHTIKQFPNGISATGTDALRFTFSALASNTRDIQWDMNRLKGYRNFCNKLWNASRFVLKNTKDHDYFNFSVNDNMLLINKWILIKFNNTVKSYRNSLDSYRFDIAANILYDFIWNVFCDWYLEFVKSVIKSGSYQDIYFTKNVLIHVLELLLRLSHPIMPFITEAIWQRVKIIKHIKDRTIMLQSFPEYNDQLFDKSTLSNINWIKKIIIFIRNTRSKMNISSTKLLSLFLKNINSEKKKVIQENKFILKNIASLEKISILSKQDDEPCLSLKEIIDGVDILVPVLKAIDKEIELKRLNKEIEKIKSKMLISEKKMSNQDFLSYAPKNIIDKEIKKLKSLNEIYLTLSQQLESLHDAFCKKNKIFN</sequence>
<comment type="function">
    <text evidence="1">Catalyzes the attachment of valine to tRNA(Val). As ValRS can inadvertently accommodate and process structurally similar amino acids such as threonine, to avoid such errors, it has a 'posttransfer' editing activity that hydrolyzes mischarged Thr-tRNA(Val) in a tRNA-dependent manner.</text>
</comment>
<comment type="catalytic activity">
    <reaction evidence="1">
        <text>tRNA(Val) + L-valine + ATP = L-valyl-tRNA(Val) + AMP + diphosphate</text>
        <dbReference type="Rhea" id="RHEA:10704"/>
        <dbReference type="Rhea" id="RHEA-COMP:9672"/>
        <dbReference type="Rhea" id="RHEA-COMP:9708"/>
        <dbReference type="ChEBI" id="CHEBI:30616"/>
        <dbReference type="ChEBI" id="CHEBI:33019"/>
        <dbReference type="ChEBI" id="CHEBI:57762"/>
        <dbReference type="ChEBI" id="CHEBI:78442"/>
        <dbReference type="ChEBI" id="CHEBI:78537"/>
        <dbReference type="ChEBI" id="CHEBI:456215"/>
        <dbReference type="EC" id="6.1.1.9"/>
    </reaction>
</comment>
<comment type="subunit">
    <text evidence="1">Monomer.</text>
</comment>
<comment type="subcellular location">
    <subcellularLocation>
        <location evidence="1">Cytoplasm</location>
    </subcellularLocation>
</comment>
<comment type="domain">
    <text evidence="1">ValRS has two distinct active sites: one for aminoacylation and one for editing. The misactivated threonine is translocated from the active site to the editing site.</text>
</comment>
<comment type="domain">
    <text evidence="1">The C-terminal coiled-coil domain is crucial for aminoacylation activity.</text>
</comment>
<comment type="similarity">
    <text evidence="1">Belongs to the class-I aminoacyl-tRNA synthetase family. ValS type 1 subfamily.</text>
</comment>
<organism>
    <name type="scientific">Buchnera aphidicola subsp. Schizaphis graminum (strain Sg)</name>
    <dbReference type="NCBI Taxonomy" id="198804"/>
    <lineage>
        <taxon>Bacteria</taxon>
        <taxon>Pseudomonadati</taxon>
        <taxon>Pseudomonadota</taxon>
        <taxon>Gammaproteobacteria</taxon>
        <taxon>Enterobacterales</taxon>
        <taxon>Erwiniaceae</taxon>
        <taxon>Buchnera</taxon>
    </lineage>
</organism>
<evidence type="ECO:0000255" key="1">
    <source>
        <dbReference type="HAMAP-Rule" id="MF_02004"/>
    </source>
</evidence>
<keyword id="KW-0030">Aminoacyl-tRNA synthetase</keyword>
<keyword id="KW-0067">ATP-binding</keyword>
<keyword id="KW-0175">Coiled coil</keyword>
<keyword id="KW-0963">Cytoplasm</keyword>
<keyword id="KW-0436">Ligase</keyword>
<keyword id="KW-0547">Nucleotide-binding</keyword>
<keyword id="KW-0648">Protein biosynthesis</keyword>
<proteinExistence type="inferred from homology"/>